<dbReference type="EC" id="2.4.2.18" evidence="1"/>
<dbReference type="EMBL" id="AP009247">
    <property type="protein sequence ID" value="BAF61251.1"/>
    <property type="molecule type" value="Genomic_DNA"/>
</dbReference>
<dbReference type="RefSeq" id="WP_011929521.1">
    <property type="nucleotide sequence ID" value="NC_009465.1"/>
</dbReference>
<dbReference type="SMR" id="A5CXR3"/>
<dbReference type="STRING" id="412965.COSY_0117"/>
<dbReference type="KEGG" id="vok:COSY_0117"/>
<dbReference type="eggNOG" id="COG0547">
    <property type="taxonomic scope" value="Bacteria"/>
</dbReference>
<dbReference type="HOGENOM" id="CLU_034315_2_1_6"/>
<dbReference type="OrthoDB" id="9806430at2"/>
<dbReference type="UniPathway" id="UPA00035">
    <property type="reaction ID" value="UER00041"/>
</dbReference>
<dbReference type="Proteomes" id="UP000000247">
    <property type="component" value="Chromosome"/>
</dbReference>
<dbReference type="GO" id="GO:0005829">
    <property type="term" value="C:cytosol"/>
    <property type="evidence" value="ECO:0007669"/>
    <property type="project" value="TreeGrafter"/>
</dbReference>
<dbReference type="GO" id="GO:0004048">
    <property type="term" value="F:anthranilate phosphoribosyltransferase activity"/>
    <property type="evidence" value="ECO:0007669"/>
    <property type="project" value="UniProtKB-UniRule"/>
</dbReference>
<dbReference type="GO" id="GO:0000287">
    <property type="term" value="F:magnesium ion binding"/>
    <property type="evidence" value="ECO:0007669"/>
    <property type="project" value="UniProtKB-UniRule"/>
</dbReference>
<dbReference type="GO" id="GO:0000162">
    <property type="term" value="P:L-tryptophan biosynthetic process"/>
    <property type="evidence" value="ECO:0007669"/>
    <property type="project" value="UniProtKB-UniRule"/>
</dbReference>
<dbReference type="FunFam" id="3.40.1030.10:FF:000002">
    <property type="entry name" value="Anthranilate phosphoribosyltransferase"/>
    <property type="match status" value="1"/>
</dbReference>
<dbReference type="Gene3D" id="3.40.1030.10">
    <property type="entry name" value="Nucleoside phosphorylase/phosphoribosyltransferase catalytic domain"/>
    <property type="match status" value="1"/>
</dbReference>
<dbReference type="Gene3D" id="1.20.970.10">
    <property type="entry name" value="Transferase, Pyrimidine Nucleoside Phosphorylase, Chain C"/>
    <property type="match status" value="1"/>
</dbReference>
<dbReference type="HAMAP" id="MF_00211">
    <property type="entry name" value="TrpD"/>
    <property type="match status" value="1"/>
</dbReference>
<dbReference type="InterPro" id="IPR005940">
    <property type="entry name" value="Anthranilate_Pribosyl_Tfrase"/>
</dbReference>
<dbReference type="InterPro" id="IPR000312">
    <property type="entry name" value="Glycosyl_Trfase_fam3"/>
</dbReference>
<dbReference type="InterPro" id="IPR017459">
    <property type="entry name" value="Glycosyl_Trfase_fam3_N_dom"/>
</dbReference>
<dbReference type="InterPro" id="IPR036320">
    <property type="entry name" value="Glycosyl_Trfase_fam3_N_dom_sf"/>
</dbReference>
<dbReference type="InterPro" id="IPR035902">
    <property type="entry name" value="Nuc_phospho_transferase"/>
</dbReference>
<dbReference type="NCBIfam" id="TIGR01245">
    <property type="entry name" value="trpD"/>
    <property type="match status" value="1"/>
</dbReference>
<dbReference type="PANTHER" id="PTHR43285">
    <property type="entry name" value="ANTHRANILATE PHOSPHORIBOSYLTRANSFERASE"/>
    <property type="match status" value="1"/>
</dbReference>
<dbReference type="PANTHER" id="PTHR43285:SF2">
    <property type="entry name" value="ANTHRANILATE PHOSPHORIBOSYLTRANSFERASE"/>
    <property type="match status" value="1"/>
</dbReference>
<dbReference type="Pfam" id="PF02885">
    <property type="entry name" value="Glycos_trans_3N"/>
    <property type="match status" value="1"/>
</dbReference>
<dbReference type="Pfam" id="PF00591">
    <property type="entry name" value="Glycos_transf_3"/>
    <property type="match status" value="1"/>
</dbReference>
<dbReference type="SUPFAM" id="SSF52418">
    <property type="entry name" value="Nucleoside phosphorylase/phosphoribosyltransferase catalytic domain"/>
    <property type="match status" value="1"/>
</dbReference>
<dbReference type="SUPFAM" id="SSF47648">
    <property type="entry name" value="Nucleoside phosphorylase/phosphoribosyltransferase N-terminal domain"/>
    <property type="match status" value="1"/>
</dbReference>
<accession>A5CXR3</accession>
<comment type="function">
    <text evidence="1">Catalyzes the transfer of the phosphoribosyl group of 5-phosphorylribose-1-pyrophosphate (PRPP) to anthranilate to yield N-(5'-phosphoribosyl)-anthranilate (PRA).</text>
</comment>
<comment type="catalytic activity">
    <reaction evidence="1">
        <text>N-(5-phospho-beta-D-ribosyl)anthranilate + diphosphate = 5-phospho-alpha-D-ribose 1-diphosphate + anthranilate</text>
        <dbReference type="Rhea" id="RHEA:11768"/>
        <dbReference type="ChEBI" id="CHEBI:16567"/>
        <dbReference type="ChEBI" id="CHEBI:18277"/>
        <dbReference type="ChEBI" id="CHEBI:33019"/>
        <dbReference type="ChEBI" id="CHEBI:58017"/>
        <dbReference type="EC" id="2.4.2.18"/>
    </reaction>
</comment>
<comment type="cofactor">
    <cofactor evidence="1">
        <name>Mg(2+)</name>
        <dbReference type="ChEBI" id="CHEBI:18420"/>
    </cofactor>
    <text evidence="1">Binds 2 magnesium ions per monomer.</text>
</comment>
<comment type="pathway">
    <text evidence="1">Amino-acid biosynthesis; L-tryptophan biosynthesis; L-tryptophan from chorismate: step 2/5.</text>
</comment>
<comment type="subunit">
    <text evidence="1">Homodimer.</text>
</comment>
<comment type="similarity">
    <text evidence="1">Belongs to the anthranilate phosphoribosyltransferase family.</text>
</comment>
<evidence type="ECO:0000255" key="1">
    <source>
        <dbReference type="HAMAP-Rule" id="MF_00211"/>
    </source>
</evidence>
<keyword id="KW-0028">Amino-acid biosynthesis</keyword>
<keyword id="KW-0057">Aromatic amino acid biosynthesis</keyword>
<keyword id="KW-0328">Glycosyltransferase</keyword>
<keyword id="KW-0460">Magnesium</keyword>
<keyword id="KW-0479">Metal-binding</keyword>
<keyword id="KW-1185">Reference proteome</keyword>
<keyword id="KW-0808">Transferase</keyword>
<keyword id="KW-0822">Tryptophan biosynthesis</keyword>
<sequence length="339" mass="36180">MNIQQAIKQIVKKQDLSQNEMQKVMNDIMTGKTTDTQTSGFLVGLAIKGESIDEITAVVKIIRSFTKSVTIKNTKHLVDTCGTGGDGLGLFNISTACAFVVAAAGGSVAKHGNRGISSKSGSADVLKAAGVNLNMSVERISKCIEKIGIGFMFAPFHHHSIKYTTNVRKDLAIKTIFNIVGPLTNPAKVPNQIIGVYTQNLVEPIAHVLKKLGSKHIIVVHSKDGLDEISIADDTFVAELKNGKIKTYTINPTNFGLPLGNLDDIKVNNADDSLILIQQALDGKDSVAKNIVALNSGAAIYVCELANSLQEGVSKALKILNSGVAHQKLDDFVRESTGC</sequence>
<protein>
    <recommendedName>
        <fullName evidence="1">Anthranilate phosphoribosyltransferase</fullName>
        <ecNumber evidence="1">2.4.2.18</ecNumber>
    </recommendedName>
</protein>
<feature type="chain" id="PRO_1000043079" description="Anthranilate phosphoribosyltransferase">
    <location>
        <begin position="1"/>
        <end position="339"/>
    </location>
</feature>
<feature type="binding site" evidence="1">
    <location>
        <position position="82"/>
    </location>
    <ligand>
        <name>5-phospho-alpha-D-ribose 1-diphosphate</name>
        <dbReference type="ChEBI" id="CHEBI:58017"/>
    </ligand>
</feature>
<feature type="binding site" evidence="1">
    <location>
        <position position="82"/>
    </location>
    <ligand>
        <name>anthranilate</name>
        <dbReference type="ChEBI" id="CHEBI:16567"/>
        <label>1</label>
    </ligand>
</feature>
<feature type="binding site" evidence="1">
    <location>
        <begin position="85"/>
        <end position="86"/>
    </location>
    <ligand>
        <name>5-phospho-alpha-D-ribose 1-diphosphate</name>
        <dbReference type="ChEBI" id="CHEBI:58017"/>
    </ligand>
</feature>
<feature type="binding site" evidence="1">
    <location>
        <begin position="92"/>
        <end position="95"/>
    </location>
    <ligand>
        <name>5-phospho-alpha-D-ribose 1-diphosphate</name>
        <dbReference type="ChEBI" id="CHEBI:58017"/>
    </ligand>
</feature>
<feature type="binding site" evidence="1">
    <location>
        <position position="94"/>
    </location>
    <ligand>
        <name>Mg(2+)</name>
        <dbReference type="ChEBI" id="CHEBI:18420"/>
        <label>1</label>
    </ligand>
</feature>
<feature type="binding site" evidence="1">
    <location>
        <begin position="110"/>
        <end position="118"/>
    </location>
    <ligand>
        <name>5-phospho-alpha-D-ribose 1-diphosphate</name>
        <dbReference type="ChEBI" id="CHEBI:58017"/>
    </ligand>
</feature>
<feature type="binding site" evidence="1">
    <location>
        <position position="113"/>
    </location>
    <ligand>
        <name>anthranilate</name>
        <dbReference type="ChEBI" id="CHEBI:16567"/>
        <label>1</label>
    </ligand>
</feature>
<feature type="binding site" evidence="1">
    <location>
        <position position="122"/>
    </location>
    <ligand>
        <name>5-phospho-alpha-D-ribose 1-diphosphate</name>
        <dbReference type="ChEBI" id="CHEBI:58017"/>
    </ligand>
</feature>
<feature type="binding site" evidence="1">
    <location>
        <position position="168"/>
    </location>
    <ligand>
        <name>anthranilate</name>
        <dbReference type="ChEBI" id="CHEBI:16567"/>
        <label>2</label>
    </ligand>
</feature>
<feature type="binding site" evidence="1">
    <location>
        <position position="227"/>
    </location>
    <ligand>
        <name>Mg(2+)</name>
        <dbReference type="ChEBI" id="CHEBI:18420"/>
        <label>2</label>
    </ligand>
</feature>
<feature type="binding site" evidence="1">
    <location>
        <position position="228"/>
    </location>
    <ligand>
        <name>Mg(2+)</name>
        <dbReference type="ChEBI" id="CHEBI:18420"/>
        <label>1</label>
    </ligand>
</feature>
<feature type="binding site" evidence="1">
    <location>
        <position position="228"/>
    </location>
    <ligand>
        <name>Mg(2+)</name>
        <dbReference type="ChEBI" id="CHEBI:18420"/>
        <label>2</label>
    </ligand>
</feature>
<name>TRPD_VESOH</name>
<reference key="1">
    <citation type="journal article" date="2007" name="Curr. Biol.">
        <title>Reduced genome of the thioautotrophic intracellular symbiont in a deep-sea clam, Calyptogena okutanii.</title>
        <authorList>
            <person name="Kuwahara H."/>
            <person name="Yoshida T."/>
            <person name="Takaki Y."/>
            <person name="Shimamura S."/>
            <person name="Nishi S."/>
            <person name="Harada M."/>
            <person name="Matsuyama K."/>
            <person name="Takishita K."/>
            <person name="Kawato M."/>
            <person name="Uematsu K."/>
            <person name="Fujiwara Y."/>
            <person name="Sato T."/>
            <person name="Kato C."/>
            <person name="Kitagawa M."/>
            <person name="Kato I."/>
            <person name="Maruyama T."/>
        </authorList>
    </citation>
    <scope>NUCLEOTIDE SEQUENCE [LARGE SCALE GENOMIC DNA]</scope>
    <source>
        <strain>HA</strain>
    </source>
</reference>
<gene>
    <name evidence="1" type="primary">trpD</name>
    <name type="ordered locus">COSY_0117</name>
</gene>
<organism>
    <name type="scientific">Vesicomyosocius okutanii subsp. Calyptogena okutanii (strain HA)</name>
    <dbReference type="NCBI Taxonomy" id="412965"/>
    <lineage>
        <taxon>Bacteria</taxon>
        <taxon>Pseudomonadati</taxon>
        <taxon>Pseudomonadota</taxon>
        <taxon>Gammaproteobacteria</taxon>
        <taxon>Candidatus Pseudothioglobaceae</taxon>
        <taxon>Candidatus Vesicomyosocius</taxon>
    </lineage>
</organism>
<proteinExistence type="inferred from homology"/>